<organism>
    <name type="scientific">Escherichia coli O127:H6 (strain E2348/69 / EPEC)</name>
    <dbReference type="NCBI Taxonomy" id="574521"/>
    <lineage>
        <taxon>Bacteria</taxon>
        <taxon>Pseudomonadati</taxon>
        <taxon>Pseudomonadota</taxon>
        <taxon>Gammaproteobacteria</taxon>
        <taxon>Enterobacterales</taxon>
        <taxon>Enterobacteriaceae</taxon>
        <taxon>Escherichia</taxon>
    </lineage>
</organism>
<sequence length="278" mass="31018">MDVRQSIHSAHAKTLDTQGLRNEFLVEKVFVADEYTMVYSHIDRIIVGGIMPVTKTVSVGGEVGKQLGVSYFLERRELGVINIGGAGTITVGGQCYEIGHRDALYVGKGAKEVVFASIDTATPAKFYYNCAPAHTTYPTKKVTPDEVSPVTLGDNLTSNRRTINKYFVPDVLETCQLSMGLTELAPGNLWNTMPCHTHERRMEVYFYFNMDDDACVFHMMGQPQETRHIVMHNEQAVISPSWSIHSGVGTKAYTFIWGMVGENQVFDDMDHVAVKDLR</sequence>
<protein>
    <recommendedName>
        <fullName evidence="1">4-deoxy-L-threo-5-hexosulose-uronate ketol-isomerase</fullName>
        <ecNumber evidence="1">5.3.1.17</ecNumber>
    </recommendedName>
    <alternativeName>
        <fullName evidence="1">5-keto-4-deoxyuronate isomerase</fullName>
    </alternativeName>
    <alternativeName>
        <fullName evidence="1">DKI isomerase</fullName>
    </alternativeName>
</protein>
<accession>B7UHR2</accession>
<comment type="function">
    <text evidence="1">Catalyzes the isomerization of 5-dehydro-4-deoxy-D-glucuronate to 3-deoxy-D-glycero-2,5-hexodiulosonate.</text>
</comment>
<comment type="catalytic activity">
    <reaction evidence="1">
        <text>5-dehydro-4-deoxy-D-glucuronate = 3-deoxy-D-glycero-2,5-hexodiulosonate</text>
        <dbReference type="Rhea" id="RHEA:23896"/>
        <dbReference type="ChEBI" id="CHEBI:17117"/>
        <dbReference type="ChEBI" id="CHEBI:29071"/>
        <dbReference type="EC" id="5.3.1.17"/>
    </reaction>
</comment>
<comment type="cofactor">
    <cofactor evidence="1">
        <name>Zn(2+)</name>
        <dbReference type="ChEBI" id="CHEBI:29105"/>
    </cofactor>
    <text evidence="1">Binds 1 zinc ion per subunit.</text>
</comment>
<comment type="pathway">
    <text evidence="1">Glycan metabolism; pectin degradation; 2-dehydro-3-deoxy-D-gluconate from pectin: step 4/5.</text>
</comment>
<comment type="subunit">
    <text evidence="1">Homohexamer.</text>
</comment>
<comment type="similarity">
    <text evidence="1">Belongs to the KduI family.</text>
</comment>
<reference key="1">
    <citation type="journal article" date="2009" name="J. Bacteriol.">
        <title>Complete genome sequence and comparative genome analysis of enteropathogenic Escherichia coli O127:H6 strain E2348/69.</title>
        <authorList>
            <person name="Iguchi A."/>
            <person name="Thomson N.R."/>
            <person name="Ogura Y."/>
            <person name="Saunders D."/>
            <person name="Ooka T."/>
            <person name="Henderson I.R."/>
            <person name="Harris D."/>
            <person name="Asadulghani M."/>
            <person name="Kurokawa K."/>
            <person name="Dean P."/>
            <person name="Kenny B."/>
            <person name="Quail M.A."/>
            <person name="Thurston S."/>
            <person name="Dougan G."/>
            <person name="Hayashi T."/>
            <person name="Parkhill J."/>
            <person name="Frankel G."/>
        </authorList>
    </citation>
    <scope>NUCLEOTIDE SEQUENCE [LARGE SCALE GENOMIC DNA]</scope>
    <source>
        <strain>E2348/69 / EPEC</strain>
    </source>
</reference>
<feature type="chain" id="PRO_1000147776" description="4-deoxy-L-threo-5-hexosulose-uronate ketol-isomerase">
    <location>
        <begin position="1"/>
        <end position="278"/>
    </location>
</feature>
<feature type="binding site" evidence="1">
    <location>
        <position position="196"/>
    </location>
    <ligand>
        <name>Zn(2+)</name>
        <dbReference type="ChEBI" id="CHEBI:29105"/>
    </ligand>
</feature>
<feature type="binding site" evidence="1">
    <location>
        <position position="198"/>
    </location>
    <ligand>
        <name>Zn(2+)</name>
        <dbReference type="ChEBI" id="CHEBI:29105"/>
    </ligand>
</feature>
<feature type="binding site" evidence="1">
    <location>
        <position position="203"/>
    </location>
    <ligand>
        <name>Zn(2+)</name>
        <dbReference type="ChEBI" id="CHEBI:29105"/>
    </ligand>
</feature>
<feature type="binding site" evidence="1">
    <location>
        <position position="245"/>
    </location>
    <ligand>
        <name>Zn(2+)</name>
        <dbReference type="ChEBI" id="CHEBI:29105"/>
    </ligand>
</feature>
<proteinExistence type="inferred from homology"/>
<keyword id="KW-0413">Isomerase</keyword>
<keyword id="KW-0479">Metal-binding</keyword>
<keyword id="KW-1185">Reference proteome</keyword>
<keyword id="KW-0862">Zinc</keyword>
<gene>
    <name evidence="1" type="primary">kduI</name>
    <name type="ordered locus">E2348C_3114</name>
</gene>
<evidence type="ECO:0000255" key="1">
    <source>
        <dbReference type="HAMAP-Rule" id="MF_00687"/>
    </source>
</evidence>
<name>KDUI_ECO27</name>
<dbReference type="EC" id="5.3.1.17" evidence="1"/>
<dbReference type="EMBL" id="FM180568">
    <property type="protein sequence ID" value="CAS10662.1"/>
    <property type="molecule type" value="Genomic_DNA"/>
</dbReference>
<dbReference type="RefSeq" id="WP_000383254.1">
    <property type="nucleotide sequence ID" value="NC_011601.1"/>
</dbReference>
<dbReference type="SMR" id="B7UHR2"/>
<dbReference type="KEGG" id="ecg:E2348C_3114"/>
<dbReference type="HOGENOM" id="CLU_062609_0_0_6"/>
<dbReference type="UniPathway" id="UPA00545">
    <property type="reaction ID" value="UER00826"/>
</dbReference>
<dbReference type="Proteomes" id="UP000008205">
    <property type="component" value="Chromosome"/>
</dbReference>
<dbReference type="GO" id="GO:0008697">
    <property type="term" value="F:4-deoxy-L-threo-5-hexosulose-uronate ketol-isomerase activity"/>
    <property type="evidence" value="ECO:0007669"/>
    <property type="project" value="UniProtKB-UniRule"/>
</dbReference>
<dbReference type="GO" id="GO:0008270">
    <property type="term" value="F:zinc ion binding"/>
    <property type="evidence" value="ECO:0007669"/>
    <property type="project" value="UniProtKB-UniRule"/>
</dbReference>
<dbReference type="GO" id="GO:0019698">
    <property type="term" value="P:D-galacturonate catabolic process"/>
    <property type="evidence" value="ECO:0007669"/>
    <property type="project" value="TreeGrafter"/>
</dbReference>
<dbReference type="GO" id="GO:0042840">
    <property type="term" value="P:D-glucuronate catabolic process"/>
    <property type="evidence" value="ECO:0007669"/>
    <property type="project" value="TreeGrafter"/>
</dbReference>
<dbReference type="GO" id="GO:0045490">
    <property type="term" value="P:pectin catabolic process"/>
    <property type="evidence" value="ECO:0007669"/>
    <property type="project" value="UniProtKB-UniRule"/>
</dbReference>
<dbReference type="CDD" id="cd20491">
    <property type="entry name" value="cupin_KduI_C"/>
    <property type="match status" value="1"/>
</dbReference>
<dbReference type="CDD" id="cd20294">
    <property type="entry name" value="cupin_KduI_N"/>
    <property type="match status" value="1"/>
</dbReference>
<dbReference type="FunFam" id="2.60.120.10:FF:000018">
    <property type="entry name" value="4-deoxy-L-threo-5-hexosulose-uronate ketol-isomerase"/>
    <property type="match status" value="1"/>
</dbReference>
<dbReference type="FunFam" id="2.60.120.520:FF:000001">
    <property type="entry name" value="4-deoxy-L-threo-5-hexosulose-uronate ketol-isomerase"/>
    <property type="match status" value="1"/>
</dbReference>
<dbReference type="Gene3D" id="2.60.120.10">
    <property type="entry name" value="Jelly Rolls"/>
    <property type="match status" value="1"/>
</dbReference>
<dbReference type="Gene3D" id="2.60.120.520">
    <property type="entry name" value="pectin degrading enzyme 5-keto 4- deoxyuronate isomerase, domain 1"/>
    <property type="match status" value="1"/>
</dbReference>
<dbReference type="HAMAP" id="MF_00687">
    <property type="entry name" value="KduI"/>
    <property type="match status" value="1"/>
</dbReference>
<dbReference type="InterPro" id="IPR007045">
    <property type="entry name" value="KduI"/>
</dbReference>
<dbReference type="InterPro" id="IPR021120">
    <property type="entry name" value="KduI/IolB_isomerase"/>
</dbReference>
<dbReference type="InterPro" id="IPR027449">
    <property type="entry name" value="KduI_N"/>
</dbReference>
<dbReference type="InterPro" id="IPR014710">
    <property type="entry name" value="RmlC-like_jellyroll"/>
</dbReference>
<dbReference type="InterPro" id="IPR011051">
    <property type="entry name" value="RmlC_Cupin_sf"/>
</dbReference>
<dbReference type="NCBIfam" id="NF002091">
    <property type="entry name" value="PRK00924.1"/>
    <property type="match status" value="1"/>
</dbReference>
<dbReference type="PANTHER" id="PTHR38461">
    <property type="entry name" value="4-DEOXY-L-THREO-5-HEXOSULOSE-URONATE KETOL-ISOMERASE"/>
    <property type="match status" value="1"/>
</dbReference>
<dbReference type="PANTHER" id="PTHR38461:SF1">
    <property type="entry name" value="4-DEOXY-L-THREO-5-HEXOSULOSE-URONATE KETOL-ISOMERASE"/>
    <property type="match status" value="1"/>
</dbReference>
<dbReference type="Pfam" id="PF04962">
    <property type="entry name" value="KduI"/>
    <property type="match status" value="1"/>
</dbReference>
<dbReference type="PIRSF" id="PIRSF006625">
    <property type="entry name" value="KduI"/>
    <property type="match status" value="1"/>
</dbReference>
<dbReference type="SUPFAM" id="SSF51182">
    <property type="entry name" value="RmlC-like cupins"/>
    <property type="match status" value="1"/>
</dbReference>